<feature type="chain" id="PRO_0000379053" description="Protein Hook homolog 1">
    <location>
        <begin position="1"/>
        <end position="718"/>
    </location>
</feature>
<feature type="domain" description="Calponin-homology (CH)" evidence="3">
    <location>
        <begin position="8"/>
        <end position="124"/>
    </location>
</feature>
<feature type="coiled-coil region" evidence="2">
    <location>
        <begin position="164"/>
        <end position="428"/>
    </location>
</feature>
<feature type="coiled-coil region" evidence="2">
    <location>
        <begin position="473"/>
        <end position="652"/>
    </location>
</feature>
<keyword id="KW-0175">Coiled coil</keyword>
<keyword id="KW-0963">Cytoplasm</keyword>
<keyword id="KW-0206">Cytoskeleton</keyword>
<keyword id="KW-0493">Microtubule</keyword>
<keyword id="KW-0653">Protein transport</keyword>
<keyword id="KW-1185">Reference proteome</keyword>
<keyword id="KW-0813">Transport</keyword>
<accession>Q5ZJ27</accession>
<gene>
    <name type="primary">HOOK1</name>
    <name type="ORF">RCJMB04_21h9</name>
</gene>
<proteinExistence type="evidence at transcript level"/>
<reference key="1">
    <citation type="journal article" date="2005" name="Genome Biol.">
        <title>Full-length cDNAs from chicken bursal lymphocytes to facilitate gene function analysis.</title>
        <authorList>
            <person name="Caldwell R.B."/>
            <person name="Kierzek A.M."/>
            <person name="Arakawa H."/>
            <person name="Bezzubov Y."/>
            <person name="Zaim J."/>
            <person name="Fiedler P."/>
            <person name="Kutter S."/>
            <person name="Blagodatski A."/>
            <person name="Kostovska D."/>
            <person name="Koter M."/>
            <person name="Plachy J."/>
            <person name="Carninci P."/>
            <person name="Hayashizaki Y."/>
            <person name="Buerstedde J.-M."/>
        </authorList>
    </citation>
    <scope>NUCLEOTIDE SEQUENCE [LARGE SCALE MRNA]</scope>
    <source>
        <strain>CB</strain>
        <tissue>Bursa of Fabricius</tissue>
    </source>
</reference>
<dbReference type="EMBL" id="AJ720607">
    <property type="protein sequence ID" value="CAG32266.1"/>
    <property type="molecule type" value="mRNA"/>
</dbReference>
<dbReference type="RefSeq" id="NP_001006542.1">
    <property type="nucleotide sequence ID" value="NM_001006542.1"/>
</dbReference>
<dbReference type="SMR" id="Q5ZJ27"/>
<dbReference type="FunCoup" id="Q5ZJ27">
    <property type="interactions" value="230"/>
</dbReference>
<dbReference type="STRING" id="9031.ENSGALP00000017678"/>
<dbReference type="PaxDb" id="9031-ENSGALP00000017678"/>
<dbReference type="GeneID" id="424675"/>
<dbReference type="KEGG" id="gga:424675"/>
<dbReference type="CTD" id="51361"/>
<dbReference type="VEuPathDB" id="HostDB:geneid_424675"/>
<dbReference type="eggNOG" id="ENOG502QQM8">
    <property type="taxonomic scope" value="Eukaryota"/>
</dbReference>
<dbReference type="InParanoid" id="Q5ZJ27"/>
<dbReference type="OrthoDB" id="49395at2759"/>
<dbReference type="PhylomeDB" id="Q5ZJ27"/>
<dbReference type="PRO" id="PR:Q5ZJ27"/>
<dbReference type="Proteomes" id="UP000000539">
    <property type="component" value="Unassembled WGS sequence"/>
</dbReference>
<dbReference type="GO" id="GO:0005813">
    <property type="term" value="C:centrosome"/>
    <property type="evidence" value="ECO:0000318"/>
    <property type="project" value="GO_Central"/>
</dbReference>
<dbReference type="GO" id="GO:0005737">
    <property type="term" value="C:cytoplasm"/>
    <property type="evidence" value="ECO:0000318"/>
    <property type="project" value="GO_Central"/>
</dbReference>
<dbReference type="GO" id="GO:0070695">
    <property type="term" value="C:FHF complex"/>
    <property type="evidence" value="ECO:0000250"/>
    <property type="project" value="UniProtKB"/>
</dbReference>
<dbReference type="GO" id="GO:0005874">
    <property type="term" value="C:microtubule"/>
    <property type="evidence" value="ECO:0007669"/>
    <property type="project" value="UniProtKB-KW"/>
</dbReference>
<dbReference type="GO" id="GO:0051959">
    <property type="term" value="F:dynein light intermediate chain binding"/>
    <property type="evidence" value="ECO:0000318"/>
    <property type="project" value="GO_Central"/>
</dbReference>
<dbReference type="GO" id="GO:0008017">
    <property type="term" value="F:microtubule binding"/>
    <property type="evidence" value="ECO:0000318"/>
    <property type="project" value="GO_Central"/>
</dbReference>
<dbReference type="GO" id="GO:0031122">
    <property type="term" value="P:cytoplasmic microtubule organization"/>
    <property type="evidence" value="ECO:0000318"/>
    <property type="project" value="GO_Central"/>
</dbReference>
<dbReference type="GO" id="GO:0030705">
    <property type="term" value="P:cytoskeleton-dependent intracellular transport"/>
    <property type="evidence" value="ECO:0000318"/>
    <property type="project" value="GO_Central"/>
</dbReference>
<dbReference type="GO" id="GO:0045022">
    <property type="term" value="P:early endosome to late endosome transport"/>
    <property type="evidence" value="ECO:0000250"/>
    <property type="project" value="UniProtKB"/>
</dbReference>
<dbReference type="GO" id="GO:0007032">
    <property type="term" value="P:endosome organization"/>
    <property type="evidence" value="ECO:0000250"/>
    <property type="project" value="UniProtKB"/>
</dbReference>
<dbReference type="GO" id="GO:0008333">
    <property type="term" value="P:endosome to lysosome transport"/>
    <property type="evidence" value="ECO:0000250"/>
    <property type="project" value="UniProtKB"/>
</dbReference>
<dbReference type="GO" id="GO:0007040">
    <property type="term" value="P:lysosome organization"/>
    <property type="evidence" value="ECO:0000250"/>
    <property type="project" value="UniProtKB"/>
</dbReference>
<dbReference type="GO" id="GO:0015031">
    <property type="term" value="P:protein transport"/>
    <property type="evidence" value="ECO:0007669"/>
    <property type="project" value="UniProtKB-KW"/>
</dbReference>
<dbReference type="CDD" id="cd22225">
    <property type="entry name" value="HkD_Hook1"/>
    <property type="match status" value="1"/>
</dbReference>
<dbReference type="FunFam" id="1.10.418.10:FF:000024">
    <property type="entry name" value="Hook homolog 3 (Drosophila)"/>
    <property type="match status" value="1"/>
</dbReference>
<dbReference type="Gene3D" id="1.20.5.170">
    <property type="match status" value="1"/>
</dbReference>
<dbReference type="Gene3D" id="1.10.418.10">
    <property type="entry name" value="Calponin-like domain"/>
    <property type="match status" value="1"/>
</dbReference>
<dbReference type="InterPro" id="IPR001715">
    <property type="entry name" value="CH_dom"/>
</dbReference>
<dbReference type="InterPro" id="IPR036872">
    <property type="entry name" value="CH_dom_sf"/>
</dbReference>
<dbReference type="InterPro" id="IPR008636">
    <property type="entry name" value="Hook_C"/>
</dbReference>
<dbReference type="InterPro" id="IPR043936">
    <property type="entry name" value="HOOK_N"/>
</dbReference>
<dbReference type="PANTHER" id="PTHR18947">
    <property type="entry name" value="HOOK PROTEINS"/>
    <property type="match status" value="1"/>
</dbReference>
<dbReference type="PANTHER" id="PTHR18947:SF36">
    <property type="entry name" value="PROTEIN HOOK HOMOLOG 1"/>
    <property type="match status" value="1"/>
</dbReference>
<dbReference type="Pfam" id="PF05622">
    <property type="entry name" value="HOOK"/>
    <property type="match status" value="1"/>
</dbReference>
<dbReference type="Pfam" id="PF19047">
    <property type="entry name" value="HOOK_N"/>
    <property type="match status" value="1"/>
</dbReference>
<dbReference type="SUPFAM" id="SSF116907">
    <property type="entry name" value="Hook domain"/>
    <property type="match status" value="1"/>
</dbReference>
<dbReference type="PROSITE" id="PS50021">
    <property type="entry name" value="CH"/>
    <property type="match status" value="1"/>
</dbReference>
<sequence>MEGKAADPLLCDSLILWLQTFNTAAPCRNVQDLTNGVAMAQVLHQIDVAWFDASWLNRIKEDVGDNWRIKSSNLKKILQGIMDYYHEFLDQQISEELIPDLNKISENSDPTELGRLMQLILGCAVNCERKQEHIQNIMTLEESVQHVVMTAIQELMSKEAMGPSASDVSSEMEQQLKKALEDLQEAIAEKEELAQRCQELDLQVAALQDEKNSLVSENEILNDRLEQLDDSLDDPNTVVAKKYFHAQLQLEQLQEENFRLEAAKDDYRVHCEDLEKQLIELQHRNNELTSLAEESRALKDENDILRAAADKASKLESTVEVYRKKLQDLNDFRRQVKSLQETNMMYMHNTVSLEDELREANAARAQLETYKRQVQELHNKLSEESKRADKLAFEMKRLEEKHEALVKEKERLVIQCDALKETNEELRYSQMQQDHLSRTDASRIKSHDNLAAELLPVEYREMFIQLQHENKMLLLQQEGSENERIMELQKQLEQKQWTVNELGTEKRLNKERIGELQQQIEDLQKTLQEQGSKTEGSSNLKQKLAAHMEKLSEVHDELQKKEAALAELQPDVSQNPQKIGELEAALRKKDEDMKAMEERYKMYLEKARNVIKTLDPKLNPASAEIMLLRKQITERDKKIEALEAEYKLAKLRDYEENLIVTAWYNKSLTLQKLGMEARLLGSGGACRDGPGRSFLAQQRHVTNTRRNLPVKVPSATSD</sequence>
<protein>
    <recommendedName>
        <fullName>Protein Hook homolog 1</fullName>
    </recommendedName>
</protein>
<organism>
    <name type="scientific">Gallus gallus</name>
    <name type="common">Chicken</name>
    <dbReference type="NCBI Taxonomy" id="9031"/>
    <lineage>
        <taxon>Eukaryota</taxon>
        <taxon>Metazoa</taxon>
        <taxon>Chordata</taxon>
        <taxon>Craniata</taxon>
        <taxon>Vertebrata</taxon>
        <taxon>Euteleostomi</taxon>
        <taxon>Archelosauria</taxon>
        <taxon>Archosauria</taxon>
        <taxon>Dinosauria</taxon>
        <taxon>Saurischia</taxon>
        <taxon>Theropoda</taxon>
        <taxon>Coelurosauria</taxon>
        <taxon>Aves</taxon>
        <taxon>Neognathae</taxon>
        <taxon>Galloanserae</taxon>
        <taxon>Galliformes</taxon>
        <taxon>Phasianidae</taxon>
        <taxon>Phasianinae</taxon>
        <taxon>Gallus</taxon>
    </lineage>
</organism>
<comment type="function">
    <text evidence="1">May function to promote vesicle trafficking and/or fusion.</text>
</comment>
<comment type="subunit">
    <text evidence="1">Interacts with microtubules.</text>
</comment>
<comment type="subcellular location">
    <subcellularLocation>
        <location evidence="1">Cytoplasm</location>
    </subcellularLocation>
    <subcellularLocation>
        <location evidence="1">Cytoplasm</location>
        <location evidence="1">Cytoskeleton</location>
    </subcellularLocation>
</comment>
<comment type="similarity">
    <text evidence="4">Belongs to the hook family.</text>
</comment>
<evidence type="ECO:0000250" key="1"/>
<evidence type="ECO:0000255" key="2"/>
<evidence type="ECO:0000255" key="3">
    <source>
        <dbReference type="PROSITE-ProRule" id="PRU00044"/>
    </source>
</evidence>
<evidence type="ECO:0000305" key="4"/>
<name>HOOK1_CHICK</name>